<comment type="function">
    <text evidence="1">Redox regulated molecular chaperone. Protects both thermally unfolding and oxidatively damaged proteins from irreversible aggregation. Plays an important role in the bacterial defense system toward oxidative stress.</text>
</comment>
<comment type="subcellular location">
    <subcellularLocation>
        <location evidence="1">Cytoplasm</location>
    </subcellularLocation>
</comment>
<comment type="PTM">
    <text evidence="1">Under oxidizing conditions two disulfide bonds are formed involving the reactive cysteines. Under reducing conditions zinc is bound to the reactive cysteines and the protein is inactive.</text>
</comment>
<comment type="similarity">
    <text evidence="1">Belongs to the HSP33 family.</text>
</comment>
<dbReference type="EMBL" id="CU928145">
    <property type="protein sequence ID" value="CAV00158.1"/>
    <property type="molecule type" value="Genomic_DNA"/>
</dbReference>
<dbReference type="RefSeq" id="WP_001135574.1">
    <property type="nucleotide sequence ID" value="NZ_CP028304.1"/>
</dbReference>
<dbReference type="SMR" id="B7L4S8"/>
<dbReference type="GeneID" id="93778597"/>
<dbReference type="KEGG" id="eck:EC55989_3806"/>
<dbReference type="HOGENOM" id="CLU_054493_0_0_6"/>
<dbReference type="Proteomes" id="UP000000746">
    <property type="component" value="Chromosome"/>
</dbReference>
<dbReference type="GO" id="GO:0005737">
    <property type="term" value="C:cytoplasm"/>
    <property type="evidence" value="ECO:0007669"/>
    <property type="project" value="UniProtKB-SubCell"/>
</dbReference>
<dbReference type="GO" id="GO:0044183">
    <property type="term" value="F:protein folding chaperone"/>
    <property type="evidence" value="ECO:0007669"/>
    <property type="project" value="TreeGrafter"/>
</dbReference>
<dbReference type="GO" id="GO:0051082">
    <property type="term" value="F:unfolded protein binding"/>
    <property type="evidence" value="ECO:0007669"/>
    <property type="project" value="UniProtKB-UniRule"/>
</dbReference>
<dbReference type="GO" id="GO:0042026">
    <property type="term" value="P:protein refolding"/>
    <property type="evidence" value="ECO:0007669"/>
    <property type="project" value="TreeGrafter"/>
</dbReference>
<dbReference type="CDD" id="cd00498">
    <property type="entry name" value="Hsp33"/>
    <property type="match status" value="1"/>
</dbReference>
<dbReference type="FunFam" id="3.55.30.10:FF:000001">
    <property type="entry name" value="33 kDa chaperonin"/>
    <property type="match status" value="1"/>
</dbReference>
<dbReference type="Gene3D" id="1.10.287.480">
    <property type="entry name" value="helix hairpin bin"/>
    <property type="match status" value="1"/>
</dbReference>
<dbReference type="Gene3D" id="3.55.30.10">
    <property type="entry name" value="Hsp33 domain"/>
    <property type="match status" value="1"/>
</dbReference>
<dbReference type="Gene3D" id="3.90.1280.10">
    <property type="entry name" value="HSP33 redox switch-like"/>
    <property type="match status" value="1"/>
</dbReference>
<dbReference type="HAMAP" id="MF_00117">
    <property type="entry name" value="HslO"/>
    <property type="match status" value="1"/>
</dbReference>
<dbReference type="InterPro" id="IPR000397">
    <property type="entry name" value="Heat_shock_Hsp33"/>
</dbReference>
<dbReference type="InterPro" id="IPR016154">
    <property type="entry name" value="Heat_shock_Hsp33_C"/>
</dbReference>
<dbReference type="InterPro" id="IPR016153">
    <property type="entry name" value="Heat_shock_Hsp33_N"/>
</dbReference>
<dbReference type="InterPro" id="IPR023212">
    <property type="entry name" value="Hsp33_helix_hairpin_bin_dom_sf"/>
</dbReference>
<dbReference type="NCBIfam" id="NF001033">
    <property type="entry name" value="PRK00114.1"/>
    <property type="match status" value="1"/>
</dbReference>
<dbReference type="PANTHER" id="PTHR30111">
    <property type="entry name" value="33 KDA CHAPERONIN"/>
    <property type="match status" value="1"/>
</dbReference>
<dbReference type="PANTHER" id="PTHR30111:SF1">
    <property type="entry name" value="33 KDA CHAPERONIN"/>
    <property type="match status" value="1"/>
</dbReference>
<dbReference type="Pfam" id="PF01430">
    <property type="entry name" value="HSP33"/>
    <property type="match status" value="1"/>
</dbReference>
<dbReference type="PIRSF" id="PIRSF005261">
    <property type="entry name" value="Heat_shock_Hsp33"/>
    <property type="match status" value="1"/>
</dbReference>
<dbReference type="SUPFAM" id="SSF64397">
    <property type="entry name" value="Hsp33 domain"/>
    <property type="match status" value="1"/>
</dbReference>
<dbReference type="SUPFAM" id="SSF118352">
    <property type="entry name" value="HSP33 redox switch-like"/>
    <property type="match status" value="1"/>
</dbReference>
<evidence type="ECO:0000255" key="1">
    <source>
        <dbReference type="HAMAP-Rule" id="MF_00117"/>
    </source>
</evidence>
<keyword id="KW-0143">Chaperone</keyword>
<keyword id="KW-0963">Cytoplasm</keyword>
<keyword id="KW-1015">Disulfide bond</keyword>
<keyword id="KW-0676">Redox-active center</keyword>
<keyword id="KW-1185">Reference proteome</keyword>
<keyword id="KW-0346">Stress response</keyword>
<keyword id="KW-0862">Zinc</keyword>
<reference key="1">
    <citation type="journal article" date="2009" name="PLoS Genet.">
        <title>Organised genome dynamics in the Escherichia coli species results in highly diverse adaptive paths.</title>
        <authorList>
            <person name="Touchon M."/>
            <person name="Hoede C."/>
            <person name="Tenaillon O."/>
            <person name="Barbe V."/>
            <person name="Baeriswyl S."/>
            <person name="Bidet P."/>
            <person name="Bingen E."/>
            <person name="Bonacorsi S."/>
            <person name="Bouchier C."/>
            <person name="Bouvet O."/>
            <person name="Calteau A."/>
            <person name="Chiapello H."/>
            <person name="Clermont O."/>
            <person name="Cruveiller S."/>
            <person name="Danchin A."/>
            <person name="Diard M."/>
            <person name="Dossat C."/>
            <person name="Karoui M.E."/>
            <person name="Frapy E."/>
            <person name="Garry L."/>
            <person name="Ghigo J.M."/>
            <person name="Gilles A.M."/>
            <person name="Johnson J."/>
            <person name="Le Bouguenec C."/>
            <person name="Lescat M."/>
            <person name="Mangenot S."/>
            <person name="Martinez-Jehanne V."/>
            <person name="Matic I."/>
            <person name="Nassif X."/>
            <person name="Oztas S."/>
            <person name="Petit M.A."/>
            <person name="Pichon C."/>
            <person name="Rouy Z."/>
            <person name="Ruf C.S."/>
            <person name="Schneider D."/>
            <person name="Tourret J."/>
            <person name="Vacherie B."/>
            <person name="Vallenet D."/>
            <person name="Medigue C."/>
            <person name="Rocha E.P.C."/>
            <person name="Denamur E."/>
        </authorList>
    </citation>
    <scope>NUCLEOTIDE SEQUENCE [LARGE SCALE GENOMIC DNA]</scope>
    <source>
        <strain>55989 / EAEC</strain>
    </source>
</reference>
<protein>
    <recommendedName>
        <fullName evidence="1">33 kDa chaperonin</fullName>
    </recommendedName>
    <alternativeName>
        <fullName evidence="1">Heat shock protein 33 homolog</fullName>
        <shortName evidence="1">HSP33</shortName>
    </alternativeName>
</protein>
<sequence length="292" mass="32534">MPQHDQLHRYLFENFAVRGELVTVSETLQQILENHDYPQPVKNVLAELLVATSLLTATLKFDGDITVQLQGDGPMNLAVINGNNNQQMRGVARVQGEIPENADLKTLVGNGYVVITITPSEGERYQGVVGLEGDTLAACLEDYFMRSEQLPTRLFIRTGDVDGKPAAGGMLLQVMPAQNAQQDDFDHLATLTETIKTEELLTLPANEVLWRLYHEEEVTVYDPQDVEFKCTCSRERCADALKTLPDEEVDSILAEDGEIDMHCDYCGNHYLFNAMDIAEIRNNASPADPQVH</sequence>
<accession>B7L4S8</accession>
<gene>
    <name evidence="1" type="primary">hslO</name>
    <name type="ordered locus">EC55989_3806</name>
</gene>
<organism>
    <name type="scientific">Escherichia coli (strain 55989 / EAEC)</name>
    <dbReference type="NCBI Taxonomy" id="585055"/>
    <lineage>
        <taxon>Bacteria</taxon>
        <taxon>Pseudomonadati</taxon>
        <taxon>Pseudomonadota</taxon>
        <taxon>Gammaproteobacteria</taxon>
        <taxon>Enterobacterales</taxon>
        <taxon>Enterobacteriaceae</taxon>
        <taxon>Escherichia</taxon>
    </lineage>
</organism>
<feature type="chain" id="PRO_1000119259" description="33 kDa chaperonin">
    <location>
        <begin position="1"/>
        <end position="292"/>
    </location>
</feature>
<feature type="disulfide bond" description="Redox-active" evidence="1">
    <location>
        <begin position="230"/>
        <end position="232"/>
    </location>
</feature>
<feature type="disulfide bond" description="Redox-active" evidence="1">
    <location>
        <begin position="263"/>
        <end position="266"/>
    </location>
</feature>
<name>HSLO_ECO55</name>
<proteinExistence type="inferred from homology"/>